<keyword id="KW-0030">Aminoacyl-tRNA synthetase</keyword>
<keyword id="KW-0067">ATP-binding</keyword>
<keyword id="KW-0963">Cytoplasm</keyword>
<keyword id="KW-0436">Ligase</keyword>
<keyword id="KW-0547">Nucleotide-binding</keyword>
<keyword id="KW-0648">Protein biosynthesis</keyword>
<gene>
    <name evidence="1" type="primary">glyQ</name>
    <name type="ordered locus">A1I_00750</name>
</gene>
<dbReference type="EC" id="6.1.1.14" evidence="1"/>
<dbReference type="EMBL" id="CP000849">
    <property type="protein sequence ID" value="ABV78550.1"/>
    <property type="molecule type" value="Genomic_DNA"/>
</dbReference>
<dbReference type="RefSeq" id="WP_011478010.1">
    <property type="nucleotide sequence ID" value="NC_009883.1"/>
</dbReference>
<dbReference type="SMR" id="A8GUQ3"/>
<dbReference type="KEGG" id="rbo:A1I_00750"/>
<dbReference type="HOGENOM" id="CLU_057066_1_0_5"/>
<dbReference type="GO" id="GO:0005829">
    <property type="term" value="C:cytosol"/>
    <property type="evidence" value="ECO:0007669"/>
    <property type="project" value="TreeGrafter"/>
</dbReference>
<dbReference type="GO" id="GO:0005524">
    <property type="term" value="F:ATP binding"/>
    <property type="evidence" value="ECO:0007669"/>
    <property type="project" value="UniProtKB-UniRule"/>
</dbReference>
<dbReference type="GO" id="GO:0004820">
    <property type="term" value="F:glycine-tRNA ligase activity"/>
    <property type="evidence" value="ECO:0007669"/>
    <property type="project" value="UniProtKB-UniRule"/>
</dbReference>
<dbReference type="GO" id="GO:0006426">
    <property type="term" value="P:glycyl-tRNA aminoacylation"/>
    <property type="evidence" value="ECO:0007669"/>
    <property type="project" value="UniProtKB-UniRule"/>
</dbReference>
<dbReference type="FunFam" id="3.30.930.10:FF:000006">
    <property type="entry name" value="Glycine--tRNA ligase alpha subunit"/>
    <property type="match status" value="1"/>
</dbReference>
<dbReference type="Gene3D" id="3.30.930.10">
    <property type="entry name" value="Bira Bifunctional Protein, Domain 2"/>
    <property type="match status" value="1"/>
</dbReference>
<dbReference type="Gene3D" id="1.20.58.180">
    <property type="entry name" value="Class II aaRS and biotin synthetases, domain 2"/>
    <property type="match status" value="1"/>
</dbReference>
<dbReference type="HAMAP" id="MF_00254">
    <property type="entry name" value="Gly_tRNA_synth_alpha"/>
    <property type="match status" value="1"/>
</dbReference>
<dbReference type="InterPro" id="IPR045864">
    <property type="entry name" value="aa-tRNA-synth_II/BPL/LPL"/>
</dbReference>
<dbReference type="InterPro" id="IPR006194">
    <property type="entry name" value="Gly-tRNA-synth_heterodimer"/>
</dbReference>
<dbReference type="InterPro" id="IPR002310">
    <property type="entry name" value="Gly-tRNA_ligase_asu"/>
</dbReference>
<dbReference type="NCBIfam" id="TIGR00388">
    <property type="entry name" value="glyQ"/>
    <property type="match status" value="1"/>
</dbReference>
<dbReference type="NCBIfam" id="NF006827">
    <property type="entry name" value="PRK09348.1"/>
    <property type="match status" value="1"/>
</dbReference>
<dbReference type="PANTHER" id="PTHR30075:SF2">
    <property type="entry name" value="GLYCINE--TRNA LIGASE, CHLOROPLASTIC_MITOCHONDRIAL 2"/>
    <property type="match status" value="1"/>
</dbReference>
<dbReference type="PANTHER" id="PTHR30075">
    <property type="entry name" value="GLYCYL-TRNA SYNTHETASE"/>
    <property type="match status" value="1"/>
</dbReference>
<dbReference type="Pfam" id="PF02091">
    <property type="entry name" value="tRNA-synt_2e"/>
    <property type="match status" value="1"/>
</dbReference>
<dbReference type="PRINTS" id="PR01044">
    <property type="entry name" value="TRNASYNTHGA"/>
</dbReference>
<dbReference type="SUPFAM" id="SSF55681">
    <property type="entry name" value="Class II aaRS and biotin synthetases"/>
    <property type="match status" value="1"/>
</dbReference>
<dbReference type="PROSITE" id="PS50861">
    <property type="entry name" value="AA_TRNA_LIGASE_II_GLYAB"/>
    <property type="match status" value="1"/>
</dbReference>
<protein>
    <recommendedName>
        <fullName evidence="1">Glycine--tRNA ligase alpha subunit</fullName>
        <ecNumber evidence="1">6.1.1.14</ecNumber>
    </recommendedName>
    <alternativeName>
        <fullName evidence="1">Glycyl-tRNA synthetase alpha subunit</fullName>
        <shortName evidence="1">GlyRS</shortName>
    </alternativeName>
</protein>
<reference key="1">
    <citation type="submission" date="2007-09" db="EMBL/GenBank/DDBJ databases">
        <title>Complete genome sequencing of Rickettsia bellii.</title>
        <authorList>
            <person name="Madan A."/>
            <person name="Lee H."/>
            <person name="Madan A."/>
            <person name="Yoon J.-G."/>
            <person name="Ryu G.-Y."/>
            <person name="Dasch G."/>
            <person name="Ereemeva M."/>
        </authorList>
    </citation>
    <scope>NUCLEOTIDE SEQUENCE [LARGE SCALE GENOMIC DNA]</scope>
    <source>
        <strain>OSU 85-389</strain>
    </source>
</reference>
<sequence>MKKLSFQQIILTLQNYWQDYGCAILQPYDAHVGAGTFHPATVLRCLGSKPWSVAYVQPSRRPGDSRYGMHPNRMQHYYQFQVILKPSPDNIQELYLKSLECLGIDLKAHDIRFVEDDWKSPTLGAAGLGWEVWCDGMEVSQFTYMQQIGGIECKLVAGEITYGLERLALYIQGIDEVKELDWNGQTGEKALKYGEVDFEAERQFSKFNLEFADSEMLLRHFKDSEEQCERLVEANLPLPAYDYCLNASHYFNLLNSRGIISVTERASYVLKVRHLAKICCMKWLEMSGE</sequence>
<feature type="chain" id="PRO_1000101220" description="Glycine--tRNA ligase alpha subunit">
    <location>
        <begin position="1"/>
        <end position="289"/>
    </location>
</feature>
<name>SYGA_RICB8</name>
<comment type="catalytic activity">
    <reaction evidence="1">
        <text>tRNA(Gly) + glycine + ATP = glycyl-tRNA(Gly) + AMP + diphosphate</text>
        <dbReference type="Rhea" id="RHEA:16013"/>
        <dbReference type="Rhea" id="RHEA-COMP:9664"/>
        <dbReference type="Rhea" id="RHEA-COMP:9683"/>
        <dbReference type="ChEBI" id="CHEBI:30616"/>
        <dbReference type="ChEBI" id="CHEBI:33019"/>
        <dbReference type="ChEBI" id="CHEBI:57305"/>
        <dbReference type="ChEBI" id="CHEBI:78442"/>
        <dbReference type="ChEBI" id="CHEBI:78522"/>
        <dbReference type="ChEBI" id="CHEBI:456215"/>
        <dbReference type="EC" id="6.1.1.14"/>
    </reaction>
</comment>
<comment type="subunit">
    <text evidence="1">Tetramer of two alpha and two beta subunits.</text>
</comment>
<comment type="subcellular location">
    <subcellularLocation>
        <location evidence="1">Cytoplasm</location>
    </subcellularLocation>
</comment>
<comment type="similarity">
    <text evidence="1">Belongs to the class-II aminoacyl-tRNA synthetase family.</text>
</comment>
<accession>A8GUQ3</accession>
<proteinExistence type="inferred from homology"/>
<evidence type="ECO:0000255" key="1">
    <source>
        <dbReference type="HAMAP-Rule" id="MF_00254"/>
    </source>
</evidence>
<organism>
    <name type="scientific">Rickettsia bellii (strain OSU 85-389)</name>
    <dbReference type="NCBI Taxonomy" id="391896"/>
    <lineage>
        <taxon>Bacteria</taxon>
        <taxon>Pseudomonadati</taxon>
        <taxon>Pseudomonadota</taxon>
        <taxon>Alphaproteobacteria</taxon>
        <taxon>Rickettsiales</taxon>
        <taxon>Rickettsiaceae</taxon>
        <taxon>Rickettsieae</taxon>
        <taxon>Rickettsia</taxon>
        <taxon>belli group</taxon>
    </lineage>
</organism>